<sequence>MQGNLPPEAQEKIEELQDLQETAQQVAQQKQQAETQLRESETALETLDDIEGDTQMYQEVGELLIETDYDEAYENLEEKVDSLEVRVETLTKQEERVQDQFEGLQEELQEMLQGGAGGGPMGPGGPGAGGA</sequence>
<organism>
    <name type="scientific">Natronomonas pharaonis (strain ATCC 35678 / DSM 2160 / CIP 103997 / JCM 8858 / NBRC 14720 / NCIMB 2260 / Gabara)</name>
    <name type="common">Halobacterium pharaonis</name>
    <dbReference type="NCBI Taxonomy" id="348780"/>
    <lineage>
        <taxon>Archaea</taxon>
        <taxon>Methanobacteriati</taxon>
        <taxon>Methanobacteriota</taxon>
        <taxon>Stenosarchaea group</taxon>
        <taxon>Halobacteria</taxon>
        <taxon>Halobacteriales</taxon>
        <taxon>Haloarculaceae</taxon>
        <taxon>Natronomonas</taxon>
    </lineage>
</organism>
<accession>Q3ITY6</accession>
<name>PFDB_NATPD</name>
<protein>
    <recommendedName>
        <fullName evidence="1">Prefoldin subunit beta</fullName>
    </recommendedName>
    <alternativeName>
        <fullName evidence="1">GimC subunit beta</fullName>
    </alternativeName>
</protein>
<feature type="chain" id="PRO_0000232444" description="Prefoldin subunit beta">
    <location>
        <begin position="1"/>
        <end position="131"/>
    </location>
</feature>
<feature type="region of interest" description="Disordered" evidence="2">
    <location>
        <begin position="19"/>
        <end position="41"/>
    </location>
</feature>
<feature type="region of interest" description="Disordered" evidence="2">
    <location>
        <begin position="112"/>
        <end position="131"/>
    </location>
</feature>
<feature type="compositionally biased region" description="Low complexity" evidence="2">
    <location>
        <begin position="20"/>
        <end position="35"/>
    </location>
</feature>
<feature type="compositionally biased region" description="Gly residues" evidence="2">
    <location>
        <begin position="114"/>
        <end position="131"/>
    </location>
</feature>
<dbReference type="EMBL" id="CR936257">
    <property type="protein sequence ID" value="CAI48397.1"/>
    <property type="molecule type" value="Genomic_DNA"/>
</dbReference>
<dbReference type="RefSeq" id="WP_011322033.1">
    <property type="nucleotide sequence ID" value="NC_007426.1"/>
</dbReference>
<dbReference type="SMR" id="Q3ITY6"/>
<dbReference type="STRING" id="348780.NP_0612A"/>
<dbReference type="EnsemblBacteria" id="CAI48397">
    <property type="protein sequence ID" value="CAI48397"/>
    <property type="gene ID" value="NP_0612A"/>
</dbReference>
<dbReference type="GeneID" id="3703018"/>
<dbReference type="KEGG" id="nph:NP_0612A"/>
<dbReference type="eggNOG" id="arCOG01342">
    <property type="taxonomic scope" value="Archaea"/>
</dbReference>
<dbReference type="HOGENOM" id="CLU_131909_0_1_2"/>
<dbReference type="OrthoDB" id="204796at2157"/>
<dbReference type="Proteomes" id="UP000002698">
    <property type="component" value="Chromosome"/>
</dbReference>
<dbReference type="GO" id="GO:0005737">
    <property type="term" value="C:cytoplasm"/>
    <property type="evidence" value="ECO:0007669"/>
    <property type="project" value="UniProtKB-SubCell"/>
</dbReference>
<dbReference type="GO" id="GO:0016272">
    <property type="term" value="C:prefoldin complex"/>
    <property type="evidence" value="ECO:0007669"/>
    <property type="project" value="UniProtKB-UniRule"/>
</dbReference>
<dbReference type="GO" id="GO:0044183">
    <property type="term" value="F:protein folding chaperone"/>
    <property type="evidence" value="ECO:0007669"/>
    <property type="project" value="TreeGrafter"/>
</dbReference>
<dbReference type="GO" id="GO:0051082">
    <property type="term" value="F:unfolded protein binding"/>
    <property type="evidence" value="ECO:0007669"/>
    <property type="project" value="UniProtKB-UniRule"/>
</dbReference>
<dbReference type="Gene3D" id="1.10.287.370">
    <property type="match status" value="1"/>
</dbReference>
<dbReference type="HAMAP" id="MF_00307">
    <property type="entry name" value="PfdB"/>
    <property type="match status" value="1"/>
</dbReference>
<dbReference type="InterPro" id="IPR002777">
    <property type="entry name" value="PFD_beta-like"/>
</dbReference>
<dbReference type="InterPro" id="IPR012713">
    <property type="entry name" value="PfdB"/>
</dbReference>
<dbReference type="InterPro" id="IPR009053">
    <property type="entry name" value="Prefoldin"/>
</dbReference>
<dbReference type="NCBIfam" id="TIGR02338">
    <property type="entry name" value="gimC_beta"/>
    <property type="match status" value="1"/>
</dbReference>
<dbReference type="PANTHER" id="PTHR20903:SF0">
    <property type="entry name" value="PREFOLDIN SUBUNIT 1"/>
    <property type="match status" value="1"/>
</dbReference>
<dbReference type="PANTHER" id="PTHR20903">
    <property type="entry name" value="PREFOLDIN SUBUNIT 1-RELATED"/>
    <property type="match status" value="1"/>
</dbReference>
<dbReference type="Pfam" id="PF01920">
    <property type="entry name" value="Prefoldin_2"/>
    <property type="match status" value="1"/>
</dbReference>
<dbReference type="SUPFAM" id="SSF46579">
    <property type="entry name" value="Prefoldin"/>
    <property type="match status" value="1"/>
</dbReference>
<comment type="function">
    <text evidence="1">Molecular chaperone capable of stabilizing a range of proteins. Seems to fulfill an ATP-independent, HSP70-like function in archaeal de novo protein folding.</text>
</comment>
<comment type="subunit">
    <text evidence="1">Heterohexamer of two alpha and four beta subunits.</text>
</comment>
<comment type="subcellular location">
    <subcellularLocation>
        <location evidence="1">Cytoplasm</location>
    </subcellularLocation>
</comment>
<comment type="similarity">
    <text evidence="1">Belongs to the prefoldin subunit beta family.</text>
</comment>
<gene>
    <name evidence="1" type="primary">pfdB</name>
    <name type="ordered locus">NP_0612A</name>
</gene>
<proteinExistence type="inferred from homology"/>
<keyword id="KW-0143">Chaperone</keyword>
<keyword id="KW-0963">Cytoplasm</keyword>
<keyword id="KW-1185">Reference proteome</keyword>
<evidence type="ECO:0000255" key="1">
    <source>
        <dbReference type="HAMAP-Rule" id="MF_00307"/>
    </source>
</evidence>
<evidence type="ECO:0000256" key="2">
    <source>
        <dbReference type="SAM" id="MobiDB-lite"/>
    </source>
</evidence>
<reference key="1">
    <citation type="journal article" date="2005" name="Genome Res.">
        <title>Living with two extremes: conclusions from the genome sequence of Natronomonas pharaonis.</title>
        <authorList>
            <person name="Falb M."/>
            <person name="Pfeiffer F."/>
            <person name="Palm P."/>
            <person name="Rodewald K."/>
            <person name="Hickmann V."/>
            <person name="Tittor J."/>
            <person name="Oesterhelt D."/>
        </authorList>
    </citation>
    <scope>NUCLEOTIDE SEQUENCE [LARGE SCALE GENOMIC DNA]</scope>
    <source>
        <strain>ATCC 35678 / DSM 2160 / CIP 103997 / JCM 8858 / NBRC 14720 / NCIMB 2260 / Gabara</strain>
    </source>
</reference>